<gene>
    <name evidence="6" type="primary">NCS2</name>
</gene>
<protein>
    <recommendedName>
        <fullName evidence="6">S-norcoclaurine synthase 2</fullName>
        <shortName evidence="6">PsNCS2</shortName>
        <ecNumber evidence="4">3.5.99.14</ecNumber>
    </recommendedName>
</protein>
<feature type="signal peptide" evidence="8">
    <location>
        <begin position="1"/>
        <end status="unknown"/>
    </location>
</feature>
<feature type="chain" id="PRO_0000433980" description="S-norcoclaurine synthase 2">
    <location>
        <begin status="unknown"/>
        <end position="231"/>
    </location>
</feature>
<feature type="transmembrane region" description="Helical" evidence="2">
    <location>
        <begin position="210"/>
        <end position="230"/>
    </location>
</feature>
<feature type="active site" description="Proton donor" evidence="1">
    <location>
        <position position="121"/>
    </location>
</feature>
<feature type="binding site" evidence="1">
    <location>
        <begin position="107"/>
        <end position="109"/>
    </location>
    <ligand>
        <name>dopamine</name>
        <dbReference type="ChEBI" id="CHEBI:59905"/>
    </ligand>
</feature>
<feature type="binding site" evidence="1">
    <location>
        <position position="140"/>
    </location>
    <ligand>
        <name>(4-hydroxyphenyl)acetaldehyde</name>
        <dbReference type="ChEBI" id="CHEBI:15621"/>
    </ligand>
</feature>
<proteinExistence type="evidence at protein level"/>
<comment type="function">
    <text evidence="4">Involved in the biosynthesis of (S)-coclaurine, the common precursor of all benzylisoquinoline alkaloids such as morphine, sanguinarine, codeine or papaverine. Condenses dopamine and 4-hydroxyphenylacetaldehyde.</text>
</comment>
<comment type="catalytic activity">
    <reaction evidence="4">
        <text>(4-hydroxyphenyl)acetaldehyde + dopamine = (S)-norcoclaurine + H2O</text>
        <dbReference type="Rhea" id="RHEA:16173"/>
        <dbReference type="ChEBI" id="CHEBI:15377"/>
        <dbReference type="ChEBI" id="CHEBI:15621"/>
        <dbReference type="ChEBI" id="CHEBI:58253"/>
        <dbReference type="ChEBI" id="CHEBI:59905"/>
        <dbReference type="EC" id="3.5.99.14"/>
    </reaction>
</comment>
<comment type="activity regulation">
    <text evidence="3">Activity doubles within 5 hours of elicitor treatment and continues to increase for at least 80 hours.</text>
</comment>
<comment type="biophysicochemical properties">
    <kinetics>
        <KM evidence="3">1.02 mM for 4-hydroxyphenylacetaldehyde</KM>
        <text evidence="3">Sigmoidal saturation kinetics suggesting positive cooperativity in the binding of dopamine.</text>
    </kinetics>
    <phDependence>
        <text evidence="3">Optimum pH is between 6.5 and 7.0.</text>
    </phDependence>
    <temperatureDependence>
        <text evidence="3">Optimum temperature is 50 degrees Celsius.</text>
    </temperatureDependence>
</comment>
<comment type="pathway">
    <text>Alkaloid biosynthesis; (S)-reticuline biosynthesis.</text>
</comment>
<comment type="subcellular location">
    <subcellularLocation>
        <location evidence="5">Endoplasmic reticulum membrane</location>
        <topology evidence="2">Single-pass membrane protein</topology>
    </subcellularLocation>
    <subcellularLocation>
        <location evidence="5">Vacuole membrane</location>
        <topology evidence="2">Single-pass membrane protein</topology>
    </subcellularLocation>
    <text evidence="5">Initially localized to the endoplasmic reticulum but subsequently sorted to the vacuole.</text>
</comment>
<comment type="tissue specificity">
    <text evidence="3 5">Expressed in roots, stems and leaves (PubMed:11722126, PubMed:21037103). Detected in flower buds and germinating seeds (PubMed:11722126). Low expression in carpels (PubMed:21037103). Restricted to sieve elements of the phloem adjacent or proximal to laticifers (PubMed:21037103).</text>
</comment>
<comment type="induction">
    <text evidence="5">Up-regulated by elicitor treatment.</text>
</comment>
<comment type="miscellaneous">
    <text evidence="8">The 40 amino acid N-terminal extension should included a signal peptide targeting the mature protein to the endoplasmic reticulum.</text>
</comment>
<comment type="similarity">
    <text evidence="7">Belongs to the BetVI family.</text>
</comment>
<comment type="caution">
    <text evidence="7">The tissue specificity and the characterization shown in PubMed:11722126 are from a soluble protein extract not making the distinction between the two proteins produced by NCS1 and NCS2.</text>
</comment>
<keyword id="KW-0017">Alkaloid metabolism</keyword>
<keyword id="KW-0256">Endoplasmic reticulum</keyword>
<keyword id="KW-0378">Hydrolase</keyword>
<keyword id="KW-0472">Membrane</keyword>
<keyword id="KW-0732">Signal</keyword>
<keyword id="KW-0812">Transmembrane</keyword>
<keyword id="KW-1133">Transmembrane helix</keyword>
<keyword id="KW-0926">Vacuole</keyword>
<organism evidence="9">
    <name type="scientific">Papaver somniferum</name>
    <name type="common">Opium poppy</name>
    <dbReference type="NCBI Taxonomy" id="3469"/>
    <lineage>
        <taxon>Eukaryota</taxon>
        <taxon>Viridiplantae</taxon>
        <taxon>Streptophyta</taxon>
        <taxon>Embryophyta</taxon>
        <taxon>Tracheophyta</taxon>
        <taxon>Spermatophyta</taxon>
        <taxon>Magnoliopsida</taxon>
        <taxon>Ranunculales</taxon>
        <taxon>Papaveraceae</taxon>
        <taxon>Papaveroideae</taxon>
        <taxon>Papaver</taxon>
    </lineage>
</organism>
<name>NCS2_PAPSO</name>
<reference key="1">
    <citation type="journal article" date="2005" name="Phytochemistry">
        <title>Evidence for the monophyletic evolution of benzylisoquinoline alkaloid biosynthesis in angiosperms.</title>
        <authorList>
            <person name="Liscombe D.K."/>
            <person name="Macleod B.P."/>
            <person name="Loukanina N."/>
            <person name="Nandi O.I."/>
            <person name="Facchini P.J."/>
        </authorList>
    </citation>
    <scope>NUCLEOTIDE SEQUENCE [MRNA]</scope>
    <scope>FUNCTION</scope>
    <scope>CATALYTIC ACTIVITY</scope>
</reference>
<reference key="2">
    <citation type="journal article" date="2001" name="Planta">
        <title>Isolation and partial characterization of norcoclaurine synthase, the first committed step in benzylisoquinoline alkaloid biosynthesis, from opium poppy.</title>
        <authorList>
            <person name="Samanani N."/>
            <person name="Facchini P.J."/>
        </authorList>
    </citation>
    <scope>TISSUE SPECIFICITY</scope>
    <scope>ACTIVITY REGULATION</scope>
    <scope>BIOPHYSICOCHEMICAL PROPERTIES</scope>
</reference>
<reference key="3">
    <citation type="journal article" date="2010" name="Plant Cell">
        <title>Norcoclaurine synthase is a member of the pathogenesis-related 10/Bet v1 protein family.</title>
        <authorList>
            <person name="Lee E.J."/>
            <person name="Facchini P."/>
        </authorList>
    </citation>
    <scope>TISSUE SPECIFICITY</scope>
    <scope>INDUCTION BY ELICITOR</scope>
    <scope>SUBCELLULAR LOCATION</scope>
</reference>
<dbReference type="EC" id="3.5.99.14" evidence="4"/>
<dbReference type="EMBL" id="AY860501">
    <property type="protein sequence ID" value="AAX56304.1"/>
    <property type="molecule type" value="mRNA"/>
</dbReference>
<dbReference type="SMR" id="Q4QTJ1"/>
<dbReference type="BRENDA" id="4.2.1.78">
    <property type="organism ID" value="4515"/>
</dbReference>
<dbReference type="UniPathway" id="UPA00306"/>
<dbReference type="GO" id="GO:0005789">
    <property type="term" value="C:endoplasmic reticulum membrane"/>
    <property type="evidence" value="ECO:0007669"/>
    <property type="project" value="UniProtKB-SubCell"/>
</dbReference>
<dbReference type="GO" id="GO:0005634">
    <property type="term" value="C:nucleus"/>
    <property type="evidence" value="ECO:0007669"/>
    <property type="project" value="TreeGrafter"/>
</dbReference>
<dbReference type="GO" id="GO:0005774">
    <property type="term" value="C:vacuolar membrane"/>
    <property type="evidence" value="ECO:0007669"/>
    <property type="project" value="UniProtKB-SubCell"/>
</dbReference>
<dbReference type="GO" id="GO:0050474">
    <property type="term" value="F:(S)-norcoclaurine synthase activity"/>
    <property type="evidence" value="ECO:0000314"/>
    <property type="project" value="UniProtKB"/>
</dbReference>
<dbReference type="GO" id="GO:0010427">
    <property type="term" value="F:abscisic acid binding"/>
    <property type="evidence" value="ECO:0007669"/>
    <property type="project" value="TreeGrafter"/>
</dbReference>
<dbReference type="GO" id="GO:0004864">
    <property type="term" value="F:protein phosphatase inhibitor activity"/>
    <property type="evidence" value="ECO:0007669"/>
    <property type="project" value="TreeGrafter"/>
</dbReference>
<dbReference type="GO" id="GO:0038023">
    <property type="term" value="F:signaling receptor activity"/>
    <property type="evidence" value="ECO:0007669"/>
    <property type="project" value="TreeGrafter"/>
</dbReference>
<dbReference type="GO" id="GO:0009738">
    <property type="term" value="P:abscisic acid-activated signaling pathway"/>
    <property type="evidence" value="ECO:0007669"/>
    <property type="project" value="TreeGrafter"/>
</dbReference>
<dbReference type="GO" id="GO:0009820">
    <property type="term" value="P:alkaloid metabolic process"/>
    <property type="evidence" value="ECO:0007669"/>
    <property type="project" value="UniProtKB-KW"/>
</dbReference>
<dbReference type="GO" id="GO:0006952">
    <property type="term" value="P:defense response"/>
    <property type="evidence" value="ECO:0007669"/>
    <property type="project" value="InterPro"/>
</dbReference>
<dbReference type="CDD" id="cd07816">
    <property type="entry name" value="Bet_v1-like"/>
    <property type="match status" value="1"/>
</dbReference>
<dbReference type="FunFam" id="3.30.530.20:FF:000110">
    <property type="entry name" value="S-norcoclaurine synthase 1"/>
    <property type="match status" value="1"/>
</dbReference>
<dbReference type="Gene3D" id="3.30.530.20">
    <property type="match status" value="1"/>
</dbReference>
<dbReference type="InterPro" id="IPR000916">
    <property type="entry name" value="Bet_v_I/MLP"/>
</dbReference>
<dbReference type="InterPro" id="IPR050279">
    <property type="entry name" value="Plant_def-hormone_signal"/>
</dbReference>
<dbReference type="InterPro" id="IPR023393">
    <property type="entry name" value="START-like_dom_sf"/>
</dbReference>
<dbReference type="PANTHER" id="PTHR31213:SF19">
    <property type="entry name" value="BET V I_MAJOR LATEX PROTEIN DOMAIN-CONTAINING PROTEIN"/>
    <property type="match status" value="1"/>
</dbReference>
<dbReference type="PANTHER" id="PTHR31213">
    <property type="entry name" value="OS08G0374000 PROTEIN-RELATED"/>
    <property type="match status" value="1"/>
</dbReference>
<dbReference type="Pfam" id="PF00407">
    <property type="entry name" value="Bet_v_1"/>
    <property type="match status" value="1"/>
</dbReference>
<dbReference type="SUPFAM" id="SSF55961">
    <property type="entry name" value="Bet v1-like"/>
    <property type="match status" value="1"/>
</dbReference>
<sequence length="231" mass="26001">MSKLITTEPLKSMAEVISNYVIQRESFSARNILNKNSLVKKEIRYDLEVPTSADSIWSVYSCPDIPRLLRDVLLPGVFQKLDVIEGNGGVGTVLDIVFPPGAVPRSYKEKFVNINHEKRLKEVIMIEGGYLDMGCTFYMDRIHIFEKTPNSCVIESSIIYEVKEEYAGKMAKLITTEPLESMAEVISGYVLKKRLQVFGFEIKPKLRFNLLLCLIICLVIAGGMFVAGVPL</sequence>
<evidence type="ECO:0000250" key="1">
    <source>
        <dbReference type="UniProtKB" id="Q67A25"/>
    </source>
</evidence>
<evidence type="ECO:0000255" key="2"/>
<evidence type="ECO:0000269" key="3">
    <source>
    </source>
</evidence>
<evidence type="ECO:0000269" key="4">
    <source>
    </source>
</evidence>
<evidence type="ECO:0000269" key="5">
    <source>
    </source>
</evidence>
<evidence type="ECO:0000303" key="6">
    <source>
    </source>
</evidence>
<evidence type="ECO:0000305" key="7"/>
<evidence type="ECO:0000305" key="8">
    <source>
    </source>
</evidence>
<evidence type="ECO:0000312" key="9">
    <source>
        <dbReference type="EMBL" id="AAX56304.1"/>
    </source>
</evidence>
<accession>Q4QTJ1</accession>